<evidence type="ECO:0000255" key="1"/>
<evidence type="ECO:0000256" key="2">
    <source>
        <dbReference type="SAM" id="MobiDB-lite"/>
    </source>
</evidence>
<evidence type="ECO:0000269" key="3">
    <source>
    </source>
</evidence>
<evidence type="ECO:0000269" key="4">
    <source>
    </source>
</evidence>
<evidence type="ECO:0000269" key="5">
    <source>
    </source>
</evidence>
<evidence type="ECO:0000269" key="6">
    <source>
    </source>
</evidence>
<evidence type="ECO:0000269" key="7">
    <source>
    </source>
</evidence>
<evidence type="ECO:0000269" key="8">
    <source>
    </source>
</evidence>
<evidence type="ECO:0000303" key="9">
    <source>
    </source>
</evidence>
<evidence type="ECO:0000303" key="10">
    <source>
    </source>
</evidence>
<evidence type="ECO:0000305" key="11"/>
<evidence type="ECO:0000305" key="12">
    <source>
    </source>
</evidence>
<evidence type="ECO:0000312" key="13">
    <source>
        <dbReference type="SGD" id="S000004389"/>
    </source>
</evidence>
<evidence type="ECO:0007829" key="14">
    <source>
        <dbReference type="PDB" id="7NKU"/>
    </source>
</evidence>
<evidence type="ECO:0007829" key="15">
    <source>
        <dbReference type="PDB" id="7Z11"/>
    </source>
</evidence>
<name>AFG2_YEAST</name>
<sequence>MAPKSSSSGSKKKSSASSNSADAKASKFKLPAEFITRPHPSKDHGKETCTAYIHPNVLSSLEINPGSFCTVGKIGENGILVIARAGDEEVHPVNVITLSTTIRSVGNLILGDRLELKKAQVQPPYATKVTVGSLQGYNILECMEEKVIQKLLDDSGVIMPGMIFQNLKTKAGDESIDVVITDASDDSLPDVSQLDLNMDDMYGGLDNLFYLSPPFIFRKGSTHITFSKETQANRKYNLPEPLSYAAVGGLDKEIESLKSAIEIPLHQPTLFSSFGVSPPRGILLHGPPGTGKTMLLRVVANTSNAHVLTINGPSIVSKYLGETEAALRDIFNEARKYQPSIIFIDEIDSIAPNRANDDSGEVESRVVATLLTLMDGMGAAGKVVVIAATNRPNSVDPALRRPGRFDQEVEIGIPDVDARFDILTKQFSRMSSDRHVLDSEAIKYIASKTHGYVGADLTALCRESVMKTIQRGLGTDANIDKFSLKVTLKDVESAMVDIRPSAMREIFLEMPKVYWSDIGGQEELKTKMKEMIQLPLEASETFARLGISAPKGVLLYGPPGCSKTLTAKALATESGINFLAVKGPEIFNKYVGESERAIREIFRKARSAAPSIIFFDEIDALSPDRDGSSTSAANHVLTSLLNEIDGVEELKGVVIVAATNRPDEIDAALLRPGRLDRHIYVGPPDVNARLEILKKCTKKFNTEESGVDLHELADRTEGYSGAEVVLLCQEAGLAAIMEDLDVAKVELRHFEKAFKGIARGITPEMLSYYEEFALRSGSSS</sequence>
<dbReference type="EC" id="3.6.4.10" evidence="3 6 7"/>
<dbReference type="EMBL" id="L14615">
    <property type="protein sequence ID" value="AAC37367.1"/>
    <property type="molecule type" value="Unassigned_DNA"/>
</dbReference>
<dbReference type="EMBL" id="U19729">
    <property type="protein sequence ID" value="AAB82355.1"/>
    <property type="molecule type" value="Genomic_DNA"/>
</dbReference>
<dbReference type="EMBL" id="AY693116">
    <property type="protein sequence ID" value="AAT93135.1"/>
    <property type="molecule type" value="Genomic_DNA"/>
</dbReference>
<dbReference type="EMBL" id="BK006945">
    <property type="protein sequence ID" value="DAA09698.1"/>
    <property type="molecule type" value="Genomic_DNA"/>
</dbReference>
<dbReference type="PIR" id="S39110">
    <property type="entry name" value="S39110"/>
</dbReference>
<dbReference type="RefSeq" id="NP_013501.1">
    <property type="nucleotide sequence ID" value="NM_001182285.1"/>
</dbReference>
<dbReference type="PDB" id="7NKU">
    <property type="method" value="EM"/>
    <property type="resolution" value="3.40 A"/>
    <property type="chains" value="A/B/C/D/E/F=1-780"/>
</dbReference>
<dbReference type="PDB" id="7WBB">
    <property type="method" value="EM"/>
    <property type="resolution" value="3.60 A"/>
    <property type="chains" value="A/B/C/D/E/F=1-780"/>
</dbReference>
<dbReference type="PDB" id="7WD3">
    <property type="method" value="EM"/>
    <property type="resolution" value="3.80 A"/>
    <property type="chains" value="A/B/C/D/E/F=29-776"/>
</dbReference>
<dbReference type="PDB" id="7YKK">
    <property type="method" value="EM"/>
    <property type="resolution" value="5.90 A"/>
    <property type="chains" value="A/B/C/D/E/F=1-780"/>
</dbReference>
<dbReference type="PDB" id="7YKL">
    <property type="method" value="EM"/>
    <property type="resolution" value="5.60 A"/>
    <property type="chains" value="A/B/C/D/E/F=1-780"/>
</dbReference>
<dbReference type="PDB" id="7YKT">
    <property type="method" value="EM"/>
    <property type="resolution" value="5.90 A"/>
    <property type="chains" value="A/B/C/D/E/F=1-780"/>
</dbReference>
<dbReference type="PDB" id="7YKZ">
    <property type="method" value="EM"/>
    <property type="resolution" value="4.30 A"/>
    <property type="chains" value="A/B/C/D/E/F=1-780"/>
</dbReference>
<dbReference type="PDB" id="7Z11">
    <property type="method" value="EM"/>
    <property type="resolution" value="3.20 A"/>
    <property type="chains" value="A/B/C/D/E/F=1-780"/>
</dbReference>
<dbReference type="PDB" id="7Z34">
    <property type="method" value="EM"/>
    <property type="resolution" value="3.80 A"/>
    <property type="chains" value="Aa/m/n/t/w/x=1-780"/>
</dbReference>
<dbReference type="PDBsum" id="7NKU"/>
<dbReference type="PDBsum" id="7WBB"/>
<dbReference type="PDBsum" id="7WD3"/>
<dbReference type="PDBsum" id="7YKK"/>
<dbReference type="PDBsum" id="7YKL"/>
<dbReference type="PDBsum" id="7YKT"/>
<dbReference type="PDBsum" id="7YKZ"/>
<dbReference type="PDBsum" id="7Z11"/>
<dbReference type="PDBsum" id="7Z34"/>
<dbReference type="EMDB" id="EMD-12448"/>
<dbReference type="EMDB" id="EMD-14437"/>
<dbReference type="EMDB" id="EMD-14471"/>
<dbReference type="SMR" id="P32794"/>
<dbReference type="BioGRID" id="31656">
    <property type="interactions" value="355"/>
</dbReference>
<dbReference type="DIP" id="DIP-4470N"/>
<dbReference type="FunCoup" id="P32794">
    <property type="interactions" value="470"/>
</dbReference>
<dbReference type="IntAct" id="P32794">
    <property type="interactions" value="37"/>
</dbReference>
<dbReference type="MINT" id="P32794"/>
<dbReference type="STRING" id="4932.YLR397C"/>
<dbReference type="iPTMnet" id="P32794"/>
<dbReference type="PaxDb" id="4932-YLR397C"/>
<dbReference type="PeptideAtlas" id="P32794"/>
<dbReference type="EnsemblFungi" id="YLR397C_mRNA">
    <property type="protein sequence ID" value="YLR397C"/>
    <property type="gene ID" value="YLR397C"/>
</dbReference>
<dbReference type="GeneID" id="851113"/>
<dbReference type="KEGG" id="sce:YLR397C"/>
<dbReference type="AGR" id="SGD:S000004389"/>
<dbReference type="SGD" id="S000004389">
    <property type="gene designation" value="AFG2"/>
</dbReference>
<dbReference type="VEuPathDB" id="FungiDB:YLR397C"/>
<dbReference type="eggNOG" id="KOG0730">
    <property type="taxonomic scope" value="Eukaryota"/>
</dbReference>
<dbReference type="GeneTree" id="ENSGT00940000157323"/>
<dbReference type="HOGENOM" id="CLU_000688_12_3_1"/>
<dbReference type="InParanoid" id="P32794"/>
<dbReference type="OMA" id="DRHIYVA"/>
<dbReference type="OrthoDB" id="27435at2759"/>
<dbReference type="BioCyc" id="YEAST:G3O-32461-MONOMER"/>
<dbReference type="BioGRID-ORCS" id="851113">
    <property type="hits" value="0 hits in 10 CRISPR screens"/>
</dbReference>
<dbReference type="PRO" id="PR:P32794"/>
<dbReference type="Proteomes" id="UP000002311">
    <property type="component" value="Chromosome XII"/>
</dbReference>
<dbReference type="RNAct" id="P32794">
    <property type="molecule type" value="protein"/>
</dbReference>
<dbReference type="GO" id="GO:0005737">
    <property type="term" value="C:cytoplasm"/>
    <property type="evidence" value="ECO:0000318"/>
    <property type="project" value="GO_Central"/>
</dbReference>
<dbReference type="GO" id="GO:0030687">
    <property type="term" value="C:preribosome, large subunit precursor"/>
    <property type="evidence" value="ECO:0000314"/>
    <property type="project" value="SGD"/>
</dbReference>
<dbReference type="GO" id="GO:0005524">
    <property type="term" value="F:ATP binding"/>
    <property type="evidence" value="ECO:0007669"/>
    <property type="project" value="UniProtKB-KW"/>
</dbReference>
<dbReference type="GO" id="GO:0016887">
    <property type="term" value="F:ATP hydrolysis activity"/>
    <property type="evidence" value="ECO:0000314"/>
    <property type="project" value="UniProtKB"/>
</dbReference>
<dbReference type="GO" id="GO:0034214">
    <property type="term" value="P:protein hexamerization"/>
    <property type="evidence" value="ECO:0000315"/>
    <property type="project" value="UniProtKB"/>
</dbReference>
<dbReference type="GO" id="GO:0009410">
    <property type="term" value="P:response to xenobiotic stimulus"/>
    <property type="evidence" value="ECO:0000315"/>
    <property type="project" value="SGD"/>
</dbReference>
<dbReference type="GO" id="GO:0042273">
    <property type="term" value="P:ribosomal large subunit biogenesis"/>
    <property type="evidence" value="ECO:0000315"/>
    <property type="project" value="UniProtKB"/>
</dbReference>
<dbReference type="CDD" id="cd19503">
    <property type="entry name" value="RecA-like_CDC48_NLV2_r1-like"/>
    <property type="match status" value="1"/>
</dbReference>
<dbReference type="CDD" id="cd19511">
    <property type="entry name" value="RecA-like_CDC48_r2-like"/>
    <property type="match status" value="1"/>
</dbReference>
<dbReference type="FunFam" id="1.10.8.60:FF:000132">
    <property type="entry name" value="AAA family ATPase"/>
    <property type="match status" value="1"/>
</dbReference>
<dbReference type="FunFam" id="1.10.8.60:FF:000157">
    <property type="entry name" value="AAA family ATPase"/>
    <property type="match status" value="1"/>
</dbReference>
<dbReference type="FunFam" id="3.40.50.300:FF:001721">
    <property type="entry name" value="AAA family ATPase, putative"/>
    <property type="match status" value="1"/>
</dbReference>
<dbReference type="FunFam" id="3.40.50.300:FF:000012">
    <property type="entry name" value="Transitional endoplasmic reticulum ATPase"/>
    <property type="match status" value="1"/>
</dbReference>
<dbReference type="Gene3D" id="1.10.8.60">
    <property type="match status" value="2"/>
</dbReference>
<dbReference type="Gene3D" id="3.40.50.300">
    <property type="entry name" value="P-loop containing nucleotide triphosphate hydrolases"/>
    <property type="match status" value="2"/>
</dbReference>
<dbReference type="InterPro" id="IPR003593">
    <property type="entry name" value="AAA+_ATPase"/>
</dbReference>
<dbReference type="InterPro" id="IPR050168">
    <property type="entry name" value="AAA_ATPase_domain"/>
</dbReference>
<dbReference type="InterPro" id="IPR041569">
    <property type="entry name" value="AAA_lid_3"/>
</dbReference>
<dbReference type="InterPro" id="IPR003959">
    <property type="entry name" value="ATPase_AAA_core"/>
</dbReference>
<dbReference type="InterPro" id="IPR003960">
    <property type="entry name" value="ATPase_AAA_CS"/>
</dbReference>
<dbReference type="InterPro" id="IPR027417">
    <property type="entry name" value="P-loop_NTPase"/>
</dbReference>
<dbReference type="PANTHER" id="PTHR23077">
    <property type="entry name" value="AAA-FAMILY ATPASE"/>
    <property type="match status" value="1"/>
</dbReference>
<dbReference type="PANTHER" id="PTHR23077:SF27">
    <property type="entry name" value="ATPASE FAMILY GENE 2 PROTEIN HOMOLOG A"/>
    <property type="match status" value="1"/>
</dbReference>
<dbReference type="Pfam" id="PF00004">
    <property type="entry name" value="AAA"/>
    <property type="match status" value="2"/>
</dbReference>
<dbReference type="Pfam" id="PF17862">
    <property type="entry name" value="AAA_lid_3"/>
    <property type="match status" value="2"/>
</dbReference>
<dbReference type="SMART" id="SM00382">
    <property type="entry name" value="AAA"/>
    <property type="match status" value="2"/>
</dbReference>
<dbReference type="SUPFAM" id="SSF52540">
    <property type="entry name" value="P-loop containing nucleoside triphosphate hydrolases"/>
    <property type="match status" value="2"/>
</dbReference>
<dbReference type="PROSITE" id="PS00674">
    <property type="entry name" value="AAA"/>
    <property type="match status" value="2"/>
</dbReference>
<gene>
    <name evidence="10 13" type="primary">AFG2</name>
    <name evidence="9" type="synonym">DRG1</name>
    <name type="ordered locus">YLR397C</name>
    <name type="ORF">L8084.16</name>
</gene>
<keyword id="KW-0002">3D-structure</keyword>
<keyword id="KW-0067">ATP-binding</keyword>
<keyword id="KW-0143">Chaperone</keyword>
<keyword id="KW-0963">Cytoplasm</keyword>
<keyword id="KW-0378">Hydrolase</keyword>
<keyword id="KW-0547">Nucleotide-binding</keyword>
<keyword id="KW-1185">Reference proteome</keyword>
<keyword id="KW-0677">Repeat</keyword>
<keyword id="KW-0690">Ribosome biogenesis</keyword>
<feature type="chain" id="PRO_0000084592" description="ATPase family gene 2 protein">
    <location>
        <begin position="1"/>
        <end position="780"/>
    </location>
</feature>
<feature type="region of interest" description="Disordered" evidence="2">
    <location>
        <begin position="1"/>
        <end position="26"/>
    </location>
</feature>
<feature type="compositionally biased region" description="Low complexity" evidence="2">
    <location>
        <begin position="1"/>
        <end position="23"/>
    </location>
</feature>
<feature type="binding site" evidence="1 12">
    <location>
        <begin position="286"/>
        <end position="293"/>
    </location>
    <ligand>
        <name>ATP</name>
        <dbReference type="ChEBI" id="CHEBI:30616"/>
        <label>1</label>
    </ligand>
</feature>
<feature type="binding site" evidence="1 12">
    <location>
        <begin position="557"/>
        <end position="564"/>
    </location>
    <ligand>
        <name>ATP</name>
        <dbReference type="ChEBI" id="CHEBI:30616"/>
        <label>2</label>
    </ligand>
</feature>
<feature type="mutagenesis site" description="In dgr1-sup*; moderate loss of catalytic activity. No growth defect. Restores growth and formation of 60S ribosomal subunit maturation but not catalytic activity or oligomerization; when associated with S-457." evidence="3">
    <original>F</original>
    <variation>L</variation>
    <location>
        <position position="343"/>
    </location>
</feature>
<feature type="mutagenesis site" description="Reduces basal and RLP24-dependent ATPase activity. Increases interaction with RLP24. Slightly reduces RLP24 release. Does not affect composition of pre-60S ribosomal particles or growth." evidence="6 7">
    <original>E</original>
    <variation>Q</variation>
    <location>
        <position position="346"/>
    </location>
</feature>
<feature type="mutagenesis site" description="In afg2-18, drg1-18 or drg1-ts; temperature sensitive mutant. At the restrictive temperature of 37 degrees Celsius, impaired growth. Severe loss of ATPase activity, homohexamer formation and 60S ribosomal subunit maturation. Prevents the release of shuttling proteins NOG1, RLP24 and ARX1 from cytoplasmic pre-60S particles resulting in their cytoplasmic accumulation. Loss of interaction with RLP24 and pre-60S particles. Restores growth and formation of 60S ribosomal subunit maturation but not catalytic activity or oligomerization; when associated with L-343." evidence="3 5 6">
    <original>L</original>
    <variation>S</variation>
    <location>
        <position position="457"/>
    </location>
</feature>
<feature type="mutagenesis site" description="Increases ATPase activity and reduces affinity for ATP. Mild defect in oligomerization." evidence="3">
    <original>CS</original>
    <variation>TG</variation>
    <location>
        <begin position="561"/>
        <end position="562"/>
    </location>
</feature>
<feature type="mutagenesis site" description="In drg1-11; severe loss of ATPase activity. Severe loss of oligomerization. Resistant to diazaborine-mediated growth inhibition." evidence="3">
    <original>C</original>
    <variation>T</variation>
    <location>
        <position position="561"/>
    </location>
</feature>
<feature type="mutagenesis site" description="Increases ATPase activity. Loss of oligomerization." evidence="3">
    <original>S</original>
    <variation>G</variation>
    <location>
        <position position="562"/>
    </location>
</feature>
<feature type="mutagenesis site" description="In drg1-3; resistant to diazaborine-mediated growth inhibition." evidence="7">
    <original>A</original>
    <variation>V</variation>
    <location>
        <position position="569"/>
    </location>
</feature>
<feature type="mutagenesis site" description="Increases basal ATPase activity. Reduces RLP24-mediated activation. Does not affect interaction with RLP24. Prevents the release of shuttling proteins RLP24, NOG1 and MEX67 from cytoplasmic pre-60S ribosomal particles. Does not affect the interaction with pre-60S ribosomal particles." evidence="5 6 7">
    <original>E</original>
    <variation>Q</variation>
    <location>
        <position position="617"/>
    </location>
</feature>
<feature type="mutagenesis site" description="In drg1-1; slight loss of ATPase activity. No effect on affinity for ATP or oligomerization. Resistant to diazaborine-mediated growth inhibition. No defect in RLP24 release from pre-60S ribosomal particles in the absence or in the presence of diazaborine." evidence="3 7">
    <original>V</original>
    <variation>E</variation>
    <location>
        <position position="725"/>
    </location>
</feature>
<feature type="mutagenesis site" description="In drg1-4; resistant to diazaborine-mediated growth inhibition." evidence="7">
    <original>V</original>
    <variation>L</variation>
    <location>
        <position position="725"/>
    </location>
</feature>
<feature type="strand" evidence="15">
    <location>
        <begin position="32"/>
        <end position="38"/>
    </location>
</feature>
<feature type="helix" evidence="15">
    <location>
        <begin position="46"/>
        <end position="49"/>
    </location>
</feature>
<feature type="strand" evidence="15">
    <location>
        <begin position="50"/>
        <end position="53"/>
    </location>
</feature>
<feature type="helix" evidence="15">
    <location>
        <begin position="55"/>
        <end position="60"/>
    </location>
</feature>
<feature type="strand" evidence="15">
    <location>
        <begin position="68"/>
        <end position="71"/>
    </location>
</feature>
<feature type="strand" evidence="15">
    <location>
        <begin position="78"/>
        <end position="85"/>
    </location>
</feature>
<feature type="turn" evidence="15">
    <location>
        <begin position="88"/>
        <end position="90"/>
    </location>
</feature>
<feature type="strand" evidence="15">
    <location>
        <begin position="95"/>
        <end position="98"/>
    </location>
</feature>
<feature type="helix" evidence="15">
    <location>
        <begin position="100"/>
        <end position="106"/>
    </location>
</feature>
<feature type="strand" evidence="15">
    <location>
        <begin position="127"/>
        <end position="132"/>
    </location>
</feature>
<feature type="helix" evidence="15">
    <location>
        <begin position="139"/>
        <end position="141"/>
    </location>
</feature>
<feature type="helix" evidence="15">
    <location>
        <begin position="145"/>
        <end position="155"/>
    </location>
</feature>
<feature type="strand" evidence="15">
    <location>
        <begin position="177"/>
        <end position="184"/>
    </location>
</feature>
<feature type="strand" evidence="15">
    <location>
        <begin position="209"/>
        <end position="212"/>
    </location>
</feature>
<feature type="turn" evidence="15">
    <location>
        <begin position="219"/>
        <end position="221"/>
    </location>
</feature>
<feature type="strand" evidence="15">
    <location>
        <begin position="222"/>
        <end position="226"/>
    </location>
</feature>
<feature type="turn" evidence="15">
    <location>
        <begin position="234"/>
        <end position="236"/>
    </location>
</feature>
<feature type="turn" evidence="15">
    <location>
        <begin position="244"/>
        <end position="246"/>
    </location>
</feature>
<feature type="helix" evidence="15">
    <location>
        <begin position="251"/>
        <end position="266"/>
    </location>
</feature>
<feature type="helix" evidence="15">
    <location>
        <begin position="268"/>
        <end position="272"/>
    </location>
</feature>
<feature type="turn" evidence="15">
    <location>
        <begin position="273"/>
        <end position="275"/>
    </location>
</feature>
<feature type="strand" evidence="15">
    <location>
        <begin position="281"/>
        <end position="285"/>
    </location>
</feature>
<feature type="helix" evidence="15">
    <location>
        <begin position="292"/>
        <end position="302"/>
    </location>
</feature>
<feature type="strand" evidence="15">
    <location>
        <begin position="305"/>
        <end position="309"/>
    </location>
</feature>
<feature type="strand" evidence="15">
    <location>
        <begin position="312"/>
        <end position="315"/>
    </location>
</feature>
<feature type="helix" evidence="15">
    <location>
        <begin position="322"/>
        <end position="336"/>
    </location>
</feature>
<feature type="strand" evidence="15">
    <location>
        <begin position="338"/>
        <end position="346"/>
    </location>
</feature>
<feature type="helix" evidence="15">
    <location>
        <begin position="347"/>
        <end position="349"/>
    </location>
</feature>
<feature type="strand" evidence="15">
    <location>
        <begin position="354"/>
        <end position="356"/>
    </location>
</feature>
<feature type="helix" evidence="15">
    <location>
        <begin position="361"/>
        <end position="375"/>
    </location>
</feature>
<feature type="helix" evidence="15">
    <location>
        <begin position="378"/>
        <end position="380"/>
    </location>
</feature>
<feature type="strand" evidence="15">
    <location>
        <begin position="382"/>
        <end position="390"/>
    </location>
</feature>
<feature type="helix" evidence="15">
    <location>
        <begin position="392"/>
        <end position="394"/>
    </location>
</feature>
<feature type="helix" evidence="15">
    <location>
        <begin position="397"/>
        <end position="399"/>
    </location>
</feature>
<feature type="strand" evidence="15">
    <location>
        <begin position="407"/>
        <end position="410"/>
    </location>
</feature>
<feature type="helix" evidence="15">
    <location>
        <begin position="416"/>
        <end position="427"/>
    </location>
</feature>
<feature type="helix" evidence="15">
    <location>
        <begin position="428"/>
        <end position="433"/>
    </location>
</feature>
<feature type="helix" evidence="15">
    <location>
        <begin position="439"/>
        <end position="448"/>
    </location>
</feature>
<feature type="helix" evidence="15">
    <location>
        <begin position="455"/>
        <end position="473"/>
    </location>
</feature>
<feature type="helix" evidence="15">
    <location>
        <begin position="481"/>
        <end position="483"/>
    </location>
</feature>
<feature type="helix" evidence="15">
    <location>
        <begin position="488"/>
        <end position="497"/>
    </location>
</feature>
<feature type="helix" evidence="15">
    <location>
        <begin position="501"/>
        <end position="503"/>
    </location>
</feature>
<feature type="helix" evidence="15">
    <location>
        <begin position="515"/>
        <end position="517"/>
    </location>
</feature>
<feature type="helix" evidence="15">
    <location>
        <begin position="522"/>
        <end position="532"/>
    </location>
</feature>
<feature type="helix" evidence="15">
    <location>
        <begin position="534"/>
        <end position="537"/>
    </location>
</feature>
<feature type="helix" evidence="15">
    <location>
        <begin position="539"/>
        <end position="545"/>
    </location>
</feature>
<feature type="strand" evidence="15">
    <location>
        <begin position="552"/>
        <end position="556"/>
    </location>
</feature>
<feature type="strand" evidence="15">
    <location>
        <begin position="561"/>
        <end position="563"/>
    </location>
</feature>
<feature type="helix" evidence="15">
    <location>
        <begin position="564"/>
        <end position="573"/>
    </location>
</feature>
<feature type="strand" evidence="15">
    <location>
        <begin position="579"/>
        <end position="581"/>
    </location>
</feature>
<feature type="turn" evidence="15">
    <location>
        <begin position="583"/>
        <end position="586"/>
    </location>
</feature>
<feature type="turn" evidence="14">
    <location>
        <begin position="590"/>
        <end position="592"/>
    </location>
</feature>
<feature type="helix" evidence="15">
    <location>
        <begin position="593"/>
        <end position="607"/>
    </location>
</feature>
<feature type="strand" evidence="15">
    <location>
        <begin position="608"/>
        <end position="610"/>
    </location>
</feature>
<feature type="strand" evidence="15">
    <location>
        <begin position="612"/>
        <end position="616"/>
    </location>
</feature>
<feature type="helix" evidence="15">
    <location>
        <begin position="618"/>
        <end position="620"/>
    </location>
</feature>
<feature type="helix" evidence="15">
    <location>
        <begin position="631"/>
        <end position="648"/>
    </location>
</feature>
<feature type="strand" evidence="15">
    <location>
        <begin position="654"/>
        <end position="660"/>
    </location>
</feature>
<feature type="helix" evidence="15">
    <location>
        <begin position="662"/>
        <end position="664"/>
    </location>
</feature>
<feature type="helix" evidence="15">
    <location>
        <begin position="667"/>
        <end position="670"/>
    </location>
</feature>
<feature type="strand" evidence="15">
    <location>
        <begin position="677"/>
        <end position="680"/>
    </location>
</feature>
<feature type="helix" evidence="15">
    <location>
        <begin position="686"/>
        <end position="697"/>
    </location>
</feature>
<feature type="turn" evidence="15">
    <location>
        <begin position="698"/>
        <end position="701"/>
    </location>
</feature>
<feature type="helix" evidence="15">
    <location>
        <begin position="702"/>
        <end position="705"/>
    </location>
</feature>
<feature type="helix" evidence="15">
    <location>
        <begin position="709"/>
        <end position="715"/>
    </location>
</feature>
<feature type="turn" evidence="15">
    <location>
        <begin position="716"/>
        <end position="718"/>
    </location>
</feature>
<feature type="helix" evidence="15">
    <location>
        <begin position="721"/>
        <end position="738"/>
    </location>
</feature>
<feature type="helix" evidence="15">
    <location>
        <begin position="747"/>
        <end position="754"/>
    </location>
</feature>
<feature type="helix" evidence="15">
    <location>
        <begin position="763"/>
        <end position="772"/>
    </location>
</feature>
<feature type="turn" evidence="15">
    <location>
        <begin position="773"/>
        <end position="776"/>
    </location>
</feature>
<organism>
    <name type="scientific">Saccharomyces cerevisiae (strain ATCC 204508 / S288c)</name>
    <name type="common">Baker's yeast</name>
    <dbReference type="NCBI Taxonomy" id="559292"/>
    <lineage>
        <taxon>Eukaryota</taxon>
        <taxon>Fungi</taxon>
        <taxon>Dikarya</taxon>
        <taxon>Ascomycota</taxon>
        <taxon>Saccharomycotina</taxon>
        <taxon>Saccharomycetes</taxon>
        <taxon>Saccharomycetales</taxon>
        <taxon>Saccharomycetaceae</taxon>
        <taxon>Saccharomyces</taxon>
    </lineage>
</organism>
<reference key="1">
    <citation type="journal article" date="1993" name="Yeast">
        <title>AFG2, an essential gene in yeast, encodes a new member of the Sec18p, Pas1p, Cdc48p, TBP-1 family of putative ATPases.</title>
        <authorList>
            <person name="Thorsness P.E."/>
            <person name="White K.H."/>
            <person name="Ong W.-C."/>
        </authorList>
    </citation>
    <scope>NUCLEOTIDE SEQUENCE [GENOMIC DNA]</scope>
    <scope>FUNCTION</scope>
</reference>
<reference key="2">
    <citation type="journal article" date="1997" name="Nature">
        <title>The nucleotide sequence of Saccharomyces cerevisiae chromosome XII.</title>
        <authorList>
            <person name="Johnston M."/>
            <person name="Hillier L.W."/>
            <person name="Riles L."/>
            <person name="Albermann K."/>
            <person name="Andre B."/>
            <person name="Ansorge W."/>
            <person name="Benes V."/>
            <person name="Brueckner M."/>
            <person name="Delius H."/>
            <person name="Dubois E."/>
            <person name="Duesterhoeft A."/>
            <person name="Entian K.-D."/>
            <person name="Floeth M."/>
            <person name="Goffeau A."/>
            <person name="Hebling U."/>
            <person name="Heumann K."/>
            <person name="Heuss-Neitzel D."/>
            <person name="Hilbert H."/>
            <person name="Hilger F."/>
            <person name="Kleine K."/>
            <person name="Koetter P."/>
            <person name="Louis E.J."/>
            <person name="Messenguy F."/>
            <person name="Mewes H.-W."/>
            <person name="Miosga T."/>
            <person name="Moestl D."/>
            <person name="Mueller-Auer S."/>
            <person name="Nentwich U."/>
            <person name="Obermaier B."/>
            <person name="Piravandi E."/>
            <person name="Pohl T.M."/>
            <person name="Portetelle D."/>
            <person name="Purnelle B."/>
            <person name="Rechmann S."/>
            <person name="Rieger M."/>
            <person name="Rinke M."/>
            <person name="Rose M."/>
            <person name="Scharfe M."/>
            <person name="Scherens B."/>
            <person name="Scholler P."/>
            <person name="Schwager C."/>
            <person name="Schwarz S."/>
            <person name="Underwood A.P."/>
            <person name="Urrestarazu L.A."/>
            <person name="Vandenbol M."/>
            <person name="Verhasselt P."/>
            <person name="Vierendeels F."/>
            <person name="Voet M."/>
            <person name="Volckaert G."/>
            <person name="Voss H."/>
            <person name="Wambutt R."/>
            <person name="Wedler E."/>
            <person name="Wedler H."/>
            <person name="Zimmermann F.K."/>
            <person name="Zollner A."/>
            <person name="Hani J."/>
            <person name="Hoheisel J.D."/>
        </authorList>
    </citation>
    <scope>NUCLEOTIDE SEQUENCE [LARGE SCALE GENOMIC DNA]</scope>
    <source>
        <strain>ATCC 204508 / S288c</strain>
    </source>
</reference>
<reference key="3">
    <citation type="journal article" date="2014" name="G3 (Bethesda)">
        <title>The reference genome sequence of Saccharomyces cerevisiae: Then and now.</title>
        <authorList>
            <person name="Engel S.R."/>
            <person name="Dietrich F.S."/>
            <person name="Fisk D.G."/>
            <person name="Binkley G."/>
            <person name="Balakrishnan R."/>
            <person name="Costanzo M.C."/>
            <person name="Dwight S.S."/>
            <person name="Hitz B.C."/>
            <person name="Karra K."/>
            <person name="Nash R.S."/>
            <person name="Weng S."/>
            <person name="Wong E.D."/>
            <person name="Lloyd P."/>
            <person name="Skrzypek M.S."/>
            <person name="Miyasato S.R."/>
            <person name="Simison M."/>
            <person name="Cherry J.M."/>
        </authorList>
    </citation>
    <scope>GENOME REANNOTATION</scope>
    <source>
        <strain>ATCC 204508 / S288c</strain>
    </source>
</reference>
<reference key="4">
    <citation type="journal article" date="2007" name="Genome Res.">
        <title>Approaching a complete repository of sequence-verified protein-encoding clones for Saccharomyces cerevisiae.</title>
        <authorList>
            <person name="Hu Y."/>
            <person name="Rolfs A."/>
            <person name="Bhullar B."/>
            <person name="Murthy T.V.S."/>
            <person name="Zhu C."/>
            <person name="Berger M.F."/>
            <person name="Camargo A.A."/>
            <person name="Kelley F."/>
            <person name="McCarron S."/>
            <person name="Jepson D."/>
            <person name="Richardson A."/>
            <person name="Raphael J."/>
            <person name="Moreira D."/>
            <person name="Taycher E."/>
            <person name="Zuo D."/>
            <person name="Mohr S."/>
            <person name="Kane M.F."/>
            <person name="Williamson J."/>
            <person name="Simpson A.J.G."/>
            <person name="Bulyk M.L."/>
            <person name="Harlow E."/>
            <person name="Marsischky G."/>
            <person name="Kolodner R.D."/>
            <person name="LaBaer J."/>
        </authorList>
    </citation>
    <scope>NUCLEOTIDE SEQUENCE [GENOMIC DNA]</scope>
    <source>
        <strain>ATCC 204508 / S288c</strain>
    </source>
</reference>
<reference key="5">
    <citation type="journal article" date="2003" name="Nature">
        <title>Global analysis of protein expression in yeast.</title>
        <authorList>
            <person name="Ghaemmaghami S."/>
            <person name="Huh W.-K."/>
            <person name="Bower K."/>
            <person name="Howson R.W."/>
            <person name="Belle A."/>
            <person name="Dephoure N."/>
            <person name="O'Shea E.K."/>
            <person name="Weissman J.S."/>
        </authorList>
    </citation>
    <scope>LEVEL OF PROTEIN EXPRESSION [LARGE SCALE ANALYSIS]</scope>
</reference>
<reference key="6">
    <citation type="journal article" date="2002" name="J. Biol. Chem.">
        <title>Structural and enzymatic properties of the AAA protein Drg1p from Saccharomyces cerevisiae. Decoupling of intracellular function from ATPase activity and hexamerization.</title>
        <authorList>
            <person name="Zakalskiy A."/>
            <person name="Hoegenauer G."/>
            <person name="Ishikawa T."/>
            <person name="Wehrschuetz-Sigl E."/>
            <person name="Wendler F."/>
            <person name="Teis D."/>
            <person name="Zisser G."/>
            <person name="Steven A.C."/>
            <person name="Bergler H."/>
        </authorList>
    </citation>
    <scope>FUNCTION</scope>
    <scope>CATALYTIC ACTIVITY</scope>
    <scope>BIOPHYSICOCHEMICAL PROPERTIES</scope>
    <scope>SUBUNIT</scope>
    <scope>DOMAIN</scope>
    <scope>MUTAGENESIS OF PHE-343; LEU-457; CYS-561; SER-562 AND VAL-725</scope>
</reference>
<reference key="7">
    <citation type="journal article" date="2007" name="Mol. Cell. Biol.">
        <title>Cytoplasmic recycling of 60S preribosomal factors depends on the AAA protein Drg1.</title>
        <authorList>
            <person name="Pertschy B."/>
            <person name="Saveanu C."/>
            <person name="Zisser G."/>
            <person name="Lebreton A."/>
            <person name="Tengg M."/>
            <person name="Jacquier A."/>
            <person name="Liebminger E."/>
            <person name="Nobis B."/>
            <person name="Kappel L."/>
            <person name="van der Klei I."/>
            <person name="Hoegenauer G."/>
            <person name="Fromont-Racine M."/>
            <person name="Bergler H."/>
        </authorList>
    </citation>
    <scope>FUNCTION</scope>
    <scope>IDENTIFICATION IN THE PRE-60S COMPLEX</scope>
    <scope>SUBCELLULAR LOCATION</scope>
    <scope>MUTAGENESIS OF PHE-343; LEU-457 AND GLU-617</scope>
</reference>
<reference key="8">
    <citation type="journal article" date="2012" name="J. Cell Biol.">
        <title>Rlp24 activates the AAA-ATPase Drg1 to initiate cytoplasmic pre-60S maturation.</title>
        <authorList>
            <person name="Kappel L."/>
            <person name="Loibl M."/>
            <person name="Zisser G."/>
            <person name="Klein I."/>
            <person name="Fruhmann G."/>
            <person name="Gruber C."/>
            <person name="Unterweger S."/>
            <person name="Rechberger G."/>
            <person name="Pertschy B."/>
            <person name="Bergler H."/>
        </authorList>
    </citation>
    <scope>FUNCTION</scope>
    <scope>CATALYTIC ACTIVITY</scope>
    <scope>ACTIVITY REGULATION</scope>
    <scope>BIOPHYSICOCHEMICAL PROPERTIES</scope>
    <scope>SUBUNIT</scope>
    <scope>INTERACTION WITH RLP24</scope>
    <scope>DOMAIN</scope>
    <scope>MUTAGENESIS OF GLU-346; LEU-457 AND GLU-617</scope>
</reference>
<reference key="9">
    <citation type="journal article" date="2014" name="J. Biol. Chem.">
        <title>The drug diazaborine blocks ribosome biogenesis by inhibiting the AAA-ATPase Drg1.</title>
        <authorList>
            <person name="Loibl M."/>
            <person name="Klein I."/>
            <person name="Prattes M."/>
            <person name="Schmidt C."/>
            <person name="Kappel L."/>
            <person name="Zisser G."/>
            <person name="Gungl A."/>
            <person name="Krieger E."/>
            <person name="Pertschy B."/>
            <person name="Bergler H."/>
        </authorList>
    </citation>
    <scope>FUNCTION</scope>
    <scope>CATALYTIC ACTIVITY</scope>
    <scope>ACTIVITY REGULATION</scope>
    <scope>INTERACTION WITH RLP24</scope>
    <scope>DOMAIN</scope>
    <scope>MUTAGENESIS OF GLU-346; CYS-561; ALA-569; GLU-617 AND VAL-725</scope>
</reference>
<accession>P32794</accession>
<accession>D6VZ32</accession>
<protein>
    <recommendedName>
        <fullName evidence="10">ATPase family gene 2 protein</fullName>
        <ecNumber evidence="3 6 7">3.6.4.10</ecNumber>
    </recommendedName>
    <alternativeName>
        <fullName evidence="9">Diazaborine resistance gene 1 protein</fullName>
    </alternativeName>
</protein>
<comment type="function">
    <text evidence="3 5 6 7 8">ATP-dependent chaperone which uses the energy provided by ATP hydrolysis to generate mechanical force to disassemble protein complexes (PubMed:12006565, PubMed:17646390, PubMed:23185031, PubMed:24371142). Plays an essential role in the cytoplasmic maturation steps of pre-60S ribosomal particles by promoting the release of shuttling protein RLP24 from the pre-ribosomal particles (PubMed:17646390, PubMed:23185031, PubMed:24371142). This step facilitates the subsequent release of other shuttling proteins such as NOG1 and allows the transition of the pre-ribosomal particles to later maturation forms that bind REI1 (PubMed:17646390, PubMed:23185031, PubMed:24371142). Essential for viability (PubMed:24371142, PubMed:8109176).</text>
</comment>
<comment type="catalytic activity">
    <reaction evidence="3 6 7">
        <text>ATP + H2O = ADP + phosphate + H(+)</text>
        <dbReference type="Rhea" id="RHEA:13065"/>
        <dbReference type="ChEBI" id="CHEBI:15377"/>
        <dbReference type="ChEBI" id="CHEBI:15378"/>
        <dbReference type="ChEBI" id="CHEBI:30616"/>
        <dbReference type="ChEBI" id="CHEBI:43474"/>
        <dbReference type="ChEBI" id="CHEBI:456216"/>
        <dbReference type="EC" id="3.6.4.10"/>
    </reaction>
</comment>
<comment type="activity regulation">
    <text evidence="6 7">The hexamer is activated by RLP24 during pre-60S ribosomal particle maturation; RLP24 activates ATPase activity of both ATP-binding regions and increases cooperativity between AFG2 subunits (PubMed:23185031). The second ATP-binding region is inhibited by diazaborine; the inhibition requires prior ATP binding specifically to the second ATP-binding region (PubMed:24371142).</text>
</comment>
<comment type="biophysicochemical properties">
    <kinetics>
        <KM evidence="3">35 uM for ATP</KM>
        <KM evidence="6">270 uM for ATP</KM>
        <Vmax evidence="6">1.99 umol/h/mg enzyme</Vmax>
        <Vmax evidence="6">28.7 umol/h/mg enzyme (in presence of RLP24)</Vmax>
    </kinetics>
</comment>
<comment type="subunit">
    <text evidence="3 5 6 7">Homohexamer; ATP binding induces oligomerization (PubMed:12006565, PubMed:23185031). Forms a ring-shaped particle of about 12 nm diameter, that displays 6-fold radial symmetry (PubMed:12006565). Associates with cytoplasmic pre-60S ribosomal particles containing ARX1, ALB1, RLP24 and NOG1 (PubMed:17646390). Binds to pre-60S ribosomal particles soon after their export from the nucleus and is released before REI1 and LSG1 are incorporated into the particles (PubMed:17646390). Hexameric form interacts with RLP24 (via C-terminal); the interaction recruits AFG2 to pre-60S ribosomal particles and promotes AFG2 ATPase activity and RLP24 release from pre-60S ribosomal particles (PubMed:23185031, PubMed:24371142). Interacts (via N-terminus) with nucleoporin NUP116 (via N-terminus); the interaction is required for RLP24 release from pre-60S ribosomal particles (PubMed:23185031).</text>
</comment>
<comment type="subcellular location">
    <subcellularLocation>
        <location evidence="5">Cytoplasm</location>
    </subcellularLocation>
</comment>
<comment type="domain">
    <text evidence="6 7 12">The first ATP-binding region binds ATP with low affinity whereas the second ATP-binding region binds ATP with high affinity (PubMed:12006565). ATP hydrolysis mediated by the second ATP binding region releases RLP24 from pre-60S ribosomal particles whereas the ATP hydrolysis mediated by the first ATP binding region is subsequently required for RLP24 dissociation from AFG2, probably by disassembling AFG2 into monomers (PubMed:23185031, PubMed:24371142).</text>
</comment>
<comment type="miscellaneous">
    <text evidence="4">Present with 799 molecules/cell in log phase SD medium.</text>
</comment>
<comment type="similarity">
    <text evidence="11">Belongs to the AAA ATPase family. AFG2 subfamily.</text>
</comment>
<proteinExistence type="evidence at protein level"/>